<protein>
    <recommendedName>
        <fullName evidence="5">Zygote arrest protein 1</fullName>
    </recommendedName>
</protein>
<sequence length="361" mass="40357">MFPASTPHPCPHPYPPTAAKAGDGWRFGARGCRPEPPSFLPGYRQLMAAEYFDSYQRAQLMALLSRMGPRPVSSRDAAVQVNPRRDASVQCSLGRRTLQPGRRRASPDARPGSCQPRSPARAGRPPRSWRTVALYSPVTFGGLSSSLEVAGDRQTPTKGEGRPAPTGTREPEPGEVAVMKAVPQPQSEEGDVQAEGQDGQEQPPREDPDSVAAMQSEPGSEEPPPAVEMAQDPSDVAASRDRASPQSTEQDKERLRFQFLEQKYGYYHCKDCNIRWESAYVWCVQGTSKVYFKQFCRVCEKSYNPYRVEDITCQSCKRTRCACPVRLRHVDPKRPHRQDLCGRCKDKRLSCDSTFSFKYII</sequence>
<comment type="function">
    <text evidence="1">mRNA-binding protein that mediates formation of MARDO (mitochondria-associated ribonucleoprotein domain), a membraneless compartment that stores maternal mRNAs in oocytes. MARDO assembly around mitochondria is directed by an increase in mitochondrial membrane potential during oocyte growth. Promotes formation of MARDO phase-separated membraneless compartment by undergoing liquid-liquid phase separation upon binding to maternal mRNAs. Binds to the 3'-UTR of maternal mRNAs. Maternal mRNAs stored in the MARDO are translationally repressed. Essential for female fertility and oocyte-to-embryo transition by coordinating maternal mRNA storage, translation and degradation.</text>
</comment>
<comment type="subunit">
    <text evidence="1">Interacts with YBX2.</text>
</comment>
<comment type="subcellular location">
    <subcellularLocation>
        <location evidence="1">Cytoplasm</location>
        <location evidence="1">Cytoplasmic ribonucleoprotein granule</location>
    </subcellularLocation>
    <subcellularLocation>
        <location evidence="1">Cytoplasm</location>
    </subcellularLocation>
    <text evidence="1">Specifically localizes to MARDO (mitochondria-associated ribonucleoprotein domain), a mitochondria-associated membraneless compartment that stores mRNAs in oocytes.</text>
</comment>
<comment type="domain">
    <text evidence="1">Disordered region at the N-terminus undergoes liquid-liquid phase separation (LLPS) for the formation of MARDO (mitochondria-associated ribonucleoprotein domain), a membraneless compartment that stores maternal mRNAs in oocytes.</text>
</comment>
<comment type="domain">
    <text evidence="1">The 3CxxC-type mediates binding to the 3'-UTR of mRNAs.</text>
</comment>
<comment type="PTM">
    <text evidence="1">Phosphorylation by CDK1 does not regulate formation of MARDO (mitochondria-associated ribonucleoprotein domain) membraneless compartment.</text>
</comment>
<comment type="PTM">
    <text evidence="1">Ubiquitinated and degradaded by the proteasome during oocyte meiotic maturation, leading to MARDO (mitochondria-associated ribonucleoprotein domain) membraneless compartment dissolution.</text>
</comment>
<comment type="similarity">
    <text evidence="5">Belongs to the ZAR1 family.</text>
</comment>
<organism>
    <name type="scientific">Rattus norvegicus</name>
    <name type="common">Rat</name>
    <dbReference type="NCBI Taxonomy" id="10116"/>
    <lineage>
        <taxon>Eukaryota</taxon>
        <taxon>Metazoa</taxon>
        <taxon>Chordata</taxon>
        <taxon>Craniata</taxon>
        <taxon>Vertebrata</taxon>
        <taxon>Euteleostomi</taxon>
        <taxon>Mammalia</taxon>
        <taxon>Eutheria</taxon>
        <taxon>Euarchontoglires</taxon>
        <taxon>Glires</taxon>
        <taxon>Rodentia</taxon>
        <taxon>Myomorpha</taxon>
        <taxon>Muroidea</taxon>
        <taxon>Muridae</taxon>
        <taxon>Murinae</taxon>
        <taxon>Rattus</taxon>
    </lineage>
</organism>
<accession>Q7TSX9</accession>
<keyword id="KW-0963">Cytoplasm</keyword>
<keyword id="KW-0217">Developmental protein</keyword>
<keyword id="KW-0221">Differentiation</keyword>
<keyword id="KW-0479">Metal-binding</keyword>
<keyword id="KW-0896">Oogenesis</keyword>
<keyword id="KW-0597">Phosphoprotein</keyword>
<keyword id="KW-1185">Reference proteome</keyword>
<keyword id="KW-0694">RNA-binding</keyword>
<keyword id="KW-0832">Ubl conjugation</keyword>
<keyword id="KW-0862">Zinc</keyword>
<keyword id="KW-0863">Zinc-finger</keyword>
<feature type="chain" id="PRO_0000187013" description="Zygote arrest protein 1">
    <location>
        <begin position="1"/>
        <end position="361"/>
    </location>
</feature>
<feature type="zinc finger region" description="3CxxC-type" evidence="2">
    <location>
        <begin position="263"/>
        <end position="346"/>
    </location>
</feature>
<feature type="region of interest" description="Disordered" evidence="3">
    <location>
        <begin position="68"/>
        <end position="129"/>
    </location>
</feature>
<feature type="region of interest" description="Disordered" evidence="3">
    <location>
        <begin position="142"/>
        <end position="252"/>
    </location>
</feature>
<feature type="compositionally biased region" description="Low complexity" evidence="3">
    <location>
        <begin position="116"/>
        <end position="128"/>
    </location>
</feature>
<feature type="compositionally biased region" description="Basic and acidic residues" evidence="3">
    <location>
        <begin position="238"/>
        <end position="252"/>
    </location>
</feature>
<feature type="modified residue" description="Phosphothreonine" evidence="1">
    <location>
        <position position="155"/>
    </location>
</feature>
<gene>
    <name evidence="4 6" type="primary">Zar1</name>
</gene>
<reference key="1">
    <citation type="journal article" date="2003" name="Biol. Reprod.">
        <title>Zygote arrest 1 (Zar1) is an evolutionarily conserved gene expressed in vertebrate ovaries.</title>
        <authorList>
            <person name="Wu X."/>
            <person name="Wang P."/>
            <person name="Brown C.A."/>
            <person name="Zilinski C.A."/>
            <person name="Matzuk M.M."/>
        </authorList>
    </citation>
    <scope>NUCLEOTIDE SEQUENCE [MRNA]</scope>
</reference>
<name>ZAR1_RAT</name>
<evidence type="ECO:0000250" key="1">
    <source>
        <dbReference type="UniProtKB" id="Q80SU3"/>
    </source>
</evidence>
<evidence type="ECO:0000255" key="2"/>
<evidence type="ECO:0000256" key="3">
    <source>
        <dbReference type="SAM" id="MobiDB-lite"/>
    </source>
</evidence>
<evidence type="ECO:0000303" key="4">
    <source>
    </source>
</evidence>
<evidence type="ECO:0000305" key="5"/>
<evidence type="ECO:0000312" key="6">
    <source>
        <dbReference type="RGD" id="727972"/>
    </source>
</evidence>
<dbReference type="EMBL" id="AY283175">
    <property type="protein sequence ID" value="AAP37037.1"/>
    <property type="molecule type" value="mRNA"/>
</dbReference>
<dbReference type="RefSeq" id="NP_852050.1">
    <property type="nucleotide sequence ID" value="NM_181385.2"/>
</dbReference>
<dbReference type="STRING" id="10116.ENSRNOP00000032032"/>
<dbReference type="PhosphoSitePlus" id="Q7TSX9"/>
<dbReference type="PaxDb" id="10116-ENSRNOP00000032032"/>
<dbReference type="Ensembl" id="ENSRNOT00000030610.2">
    <property type="protein sequence ID" value="ENSRNOP00000032032.1"/>
    <property type="gene ID" value="ENSRNOG00000026150.2"/>
</dbReference>
<dbReference type="GeneID" id="353228"/>
<dbReference type="KEGG" id="rno:353228"/>
<dbReference type="UCSC" id="RGD:727972">
    <property type="organism name" value="rat"/>
</dbReference>
<dbReference type="AGR" id="RGD:727972"/>
<dbReference type="CTD" id="326340"/>
<dbReference type="RGD" id="727972">
    <property type="gene designation" value="Zar1"/>
</dbReference>
<dbReference type="eggNOG" id="ENOG502QWC9">
    <property type="taxonomic scope" value="Eukaryota"/>
</dbReference>
<dbReference type="GeneTree" id="ENSGT00390000012305"/>
<dbReference type="HOGENOM" id="CLU_053350_0_0_1"/>
<dbReference type="InParanoid" id="Q7TSX9"/>
<dbReference type="OMA" id="CKKSRCT"/>
<dbReference type="OrthoDB" id="9885288at2759"/>
<dbReference type="PhylomeDB" id="Q7TSX9"/>
<dbReference type="TreeFam" id="TF331383"/>
<dbReference type="PRO" id="PR:Q7TSX9"/>
<dbReference type="Proteomes" id="UP000002494">
    <property type="component" value="Chromosome 14"/>
</dbReference>
<dbReference type="Bgee" id="ENSRNOG00000026150">
    <property type="expression patterns" value="Expressed in ovary"/>
</dbReference>
<dbReference type="GO" id="GO:0005737">
    <property type="term" value="C:cytoplasm"/>
    <property type="evidence" value="ECO:0000266"/>
    <property type="project" value="RGD"/>
</dbReference>
<dbReference type="GO" id="GO:0036464">
    <property type="term" value="C:cytoplasmic ribonucleoprotein granule"/>
    <property type="evidence" value="ECO:0007669"/>
    <property type="project" value="UniProtKB-SubCell"/>
</dbReference>
<dbReference type="GO" id="GO:0043232">
    <property type="term" value="C:intracellular membraneless organelle"/>
    <property type="evidence" value="ECO:0000250"/>
    <property type="project" value="UniProtKB"/>
</dbReference>
<dbReference type="GO" id="GO:0140693">
    <property type="term" value="F:molecular condensate scaffold activity"/>
    <property type="evidence" value="ECO:0000250"/>
    <property type="project" value="UniProtKB"/>
</dbReference>
<dbReference type="GO" id="GO:0003730">
    <property type="term" value="F:mRNA 3'-UTR binding"/>
    <property type="evidence" value="ECO:0000250"/>
    <property type="project" value="UniProtKB"/>
</dbReference>
<dbReference type="GO" id="GO:0140610">
    <property type="term" value="F:RNA sequestering activity"/>
    <property type="evidence" value="ECO:0000250"/>
    <property type="project" value="UniProtKB"/>
</dbReference>
<dbReference type="GO" id="GO:0008270">
    <property type="term" value="F:zinc ion binding"/>
    <property type="evidence" value="ECO:0007669"/>
    <property type="project" value="UniProtKB-KW"/>
</dbReference>
<dbReference type="GO" id="GO:0140694">
    <property type="term" value="P:membraneless organelle assembly"/>
    <property type="evidence" value="ECO:0000250"/>
    <property type="project" value="UniProtKB"/>
</dbReference>
<dbReference type="GO" id="GO:0048255">
    <property type="term" value="P:mRNA stabilization"/>
    <property type="evidence" value="ECO:0000250"/>
    <property type="project" value="UniProtKB"/>
</dbReference>
<dbReference type="GO" id="GO:0017148">
    <property type="term" value="P:negative regulation of translation"/>
    <property type="evidence" value="ECO:0000250"/>
    <property type="project" value="UniProtKB"/>
</dbReference>
<dbReference type="GO" id="GO:0001556">
    <property type="term" value="P:oocyte maturation"/>
    <property type="evidence" value="ECO:0000250"/>
    <property type="project" value="UniProtKB"/>
</dbReference>
<dbReference type="GO" id="GO:0006412">
    <property type="term" value="P:translation"/>
    <property type="evidence" value="ECO:0000318"/>
    <property type="project" value="GO_Central"/>
</dbReference>
<dbReference type="InterPro" id="IPR026775">
    <property type="entry name" value="Zar1"/>
</dbReference>
<dbReference type="InterPro" id="IPR027377">
    <property type="entry name" value="ZAR1/RTP1-5-like_Znf-3CxxC"/>
</dbReference>
<dbReference type="PANTHER" id="PTHR31054:SF6">
    <property type="entry name" value="ZYGOTE ARREST PROTEIN 1"/>
    <property type="match status" value="1"/>
</dbReference>
<dbReference type="PANTHER" id="PTHR31054">
    <property type="entry name" value="ZYGOTE ARREST PROTEIN 1-LIKE ISOFORM X1"/>
    <property type="match status" value="1"/>
</dbReference>
<dbReference type="Pfam" id="PF13695">
    <property type="entry name" value="Zn_ribbon_3CxxC"/>
    <property type="match status" value="1"/>
</dbReference>
<dbReference type="SMART" id="SM01328">
    <property type="entry name" value="zf-3CxxC"/>
    <property type="match status" value="1"/>
</dbReference>
<proteinExistence type="evidence at transcript level"/>